<feature type="chain" id="PRO_0000381210" description="Biotin synthase">
    <location>
        <begin position="1"/>
        <end position="356"/>
    </location>
</feature>
<feature type="domain" description="Radical SAM core" evidence="2">
    <location>
        <begin position="77"/>
        <end position="302"/>
    </location>
</feature>
<feature type="region of interest" description="Disordered" evidence="3">
    <location>
        <begin position="1"/>
        <end position="28"/>
    </location>
</feature>
<feature type="binding site" evidence="1">
    <location>
        <position position="92"/>
    </location>
    <ligand>
        <name>[4Fe-4S] cluster</name>
        <dbReference type="ChEBI" id="CHEBI:49883"/>
        <note>4Fe-4S-S-AdoMet</note>
    </ligand>
</feature>
<feature type="binding site" evidence="1">
    <location>
        <position position="96"/>
    </location>
    <ligand>
        <name>[4Fe-4S] cluster</name>
        <dbReference type="ChEBI" id="CHEBI:49883"/>
        <note>4Fe-4S-S-AdoMet</note>
    </ligand>
</feature>
<feature type="binding site" evidence="1">
    <location>
        <position position="99"/>
    </location>
    <ligand>
        <name>[4Fe-4S] cluster</name>
        <dbReference type="ChEBI" id="CHEBI:49883"/>
        <note>4Fe-4S-S-AdoMet</note>
    </ligand>
</feature>
<feature type="binding site" evidence="1">
    <location>
        <position position="135"/>
    </location>
    <ligand>
        <name>[2Fe-2S] cluster</name>
        <dbReference type="ChEBI" id="CHEBI:190135"/>
    </ligand>
</feature>
<feature type="binding site" evidence="1">
    <location>
        <position position="168"/>
    </location>
    <ligand>
        <name>[2Fe-2S] cluster</name>
        <dbReference type="ChEBI" id="CHEBI:190135"/>
    </ligand>
</feature>
<feature type="binding site" evidence="1">
    <location>
        <position position="227"/>
    </location>
    <ligand>
        <name>[2Fe-2S] cluster</name>
        <dbReference type="ChEBI" id="CHEBI:190135"/>
    </ligand>
</feature>
<feature type="binding site" evidence="1">
    <location>
        <position position="297"/>
    </location>
    <ligand>
        <name>[2Fe-2S] cluster</name>
        <dbReference type="ChEBI" id="CHEBI:190135"/>
    </ligand>
</feature>
<name>BIOB_ARTS2</name>
<proteinExistence type="inferred from homology"/>
<organism>
    <name type="scientific">Arthrobacter sp. (strain FB24)</name>
    <dbReference type="NCBI Taxonomy" id="290399"/>
    <lineage>
        <taxon>Bacteria</taxon>
        <taxon>Bacillati</taxon>
        <taxon>Actinomycetota</taxon>
        <taxon>Actinomycetes</taxon>
        <taxon>Micrococcales</taxon>
        <taxon>Micrococcaceae</taxon>
        <taxon>Arthrobacter</taxon>
    </lineage>
</organism>
<dbReference type="EC" id="2.8.1.6" evidence="1"/>
<dbReference type="EMBL" id="CP000454">
    <property type="protein sequence ID" value="ABK02273.1"/>
    <property type="molecule type" value="Genomic_DNA"/>
</dbReference>
<dbReference type="RefSeq" id="WP_011690740.1">
    <property type="nucleotide sequence ID" value="NC_008541.1"/>
</dbReference>
<dbReference type="SMR" id="A0JTA3"/>
<dbReference type="STRING" id="290399.Arth_0875"/>
<dbReference type="KEGG" id="art:Arth_0875"/>
<dbReference type="eggNOG" id="COG0502">
    <property type="taxonomic scope" value="Bacteria"/>
</dbReference>
<dbReference type="HOGENOM" id="CLU_033172_2_1_11"/>
<dbReference type="OrthoDB" id="9786826at2"/>
<dbReference type="UniPathway" id="UPA00078">
    <property type="reaction ID" value="UER00162"/>
</dbReference>
<dbReference type="Proteomes" id="UP000000754">
    <property type="component" value="Chromosome"/>
</dbReference>
<dbReference type="GO" id="GO:0051537">
    <property type="term" value="F:2 iron, 2 sulfur cluster binding"/>
    <property type="evidence" value="ECO:0007669"/>
    <property type="project" value="UniProtKB-KW"/>
</dbReference>
<dbReference type="GO" id="GO:0051539">
    <property type="term" value="F:4 iron, 4 sulfur cluster binding"/>
    <property type="evidence" value="ECO:0007669"/>
    <property type="project" value="UniProtKB-KW"/>
</dbReference>
<dbReference type="GO" id="GO:0004076">
    <property type="term" value="F:biotin synthase activity"/>
    <property type="evidence" value="ECO:0007669"/>
    <property type="project" value="UniProtKB-UniRule"/>
</dbReference>
<dbReference type="GO" id="GO:0005506">
    <property type="term" value="F:iron ion binding"/>
    <property type="evidence" value="ECO:0007669"/>
    <property type="project" value="UniProtKB-UniRule"/>
</dbReference>
<dbReference type="GO" id="GO:0009102">
    <property type="term" value="P:biotin biosynthetic process"/>
    <property type="evidence" value="ECO:0007669"/>
    <property type="project" value="UniProtKB-UniRule"/>
</dbReference>
<dbReference type="CDD" id="cd01335">
    <property type="entry name" value="Radical_SAM"/>
    <property type="match status" value="1"/>
</dbReference>
<dbReference type="FunFam" id="3.20.20.70:FF:000026">
    <property type="entry name" value="Biotin synthase"/>
    <property type="match status" value="1"/>
</dbReference>
<dbReference type="Gene3D" id="3.20.20.70">
    <property type="entry name" value="Aldolase class I"/>
    <property type="match status" value="1"/>
</dbReference>
<dbReference type="HAMAP" id="MF_01694">
    <property type="entry name" value="BioB"/>
    <property type="match status" value="1"/>
</dbReference>
<dbReference type="InterPro" id="IPR013785">
    <property type="entry name" value="Aldolase_TIM"/>
</dbReference>
<dbReference type="InterPro" id="IPR010722">
    <property type="entry name" value="BATS_dom"/>
</dbReference>
<dbReference type="InterPro" id="IPR002684">
    <property type="entry name" value="Biotin_synth/BioAB"/>
</dbReference>
<dbReference type="InterPro" id="IPR024177">
    <property type="entry name" value="Biotin_synthase"/>
</dbReference>
<dbReference type="InterPro" id="IPR006638">
    <property type="entry name" value="Elp3/MiaA/NifB-like_rSAM"/>
</dbReference>
<dbReference type="InterPro" id="IPR007197">
    <property type="entry name" value="rSAM"/>
</dbReference>
<dbReference type="NCBIfam" id="TIGR00433">
    <property type="entry name" value="bioB"/>
    <property type="match status" value="1"/>
</dbReference>
<dbReference type="PANTHER" id="PTHR22976">
    <property type="entry name" value="BIOTIN SYNTHASE"/>
    <property type="match status" value="1"/>
</dbReference>
<dbReference type="PANTHER" id="PTHR22976:SF2">
    <property type="entry name" value="BIOTIN SYNTHASE, MITOCHONDRIAL"/>
    <property type="match status" value="1"/>
</dbReference>
<dbReference type="Pfam" id="PF06968">
    <property type="entry name" value="BATS"/>
    <property type="match status" value="1"/>
</dbReference>
<dbReference type="Pfam" id="PF04055">
    <property type="entry name" value="Radical_SAM"/>
    <property type="match status" value="1"/>
</dbReference>
<dbReference type="PIRSF" id="PIRSF001619">
    <property type="entry name" value="Biotin_synth"/>
    <property type="match status" value="1"/>
</dbReference>
<dbReference type="SFLD" id="SFLDG01060">
    <property type="entry name" value="BATS_domain_containing"/>
    <property type="match status" value="1"/>
</dbReference>
<dbReference type="SFLD" id="SFLDG01278">
    <property type="entry name" value="biotin_synthase_like"/>
    <property type="match status" value="1"/>
</dbReference>
<dbReference type="SMART" id="SM00876">
    <property type="entry name" value="BATS"/>
    <property type="match status" value="1"/>
</dbReference>
<dbReference type="SMART" id="SM00729">
    <property type="entry name" value="Elp3"/>
    <property type="match status" value="1"/>
</dbReference>
<dbReference type="SUPFAM" id="SSF102114">
    <property type="entry name" value="Radical SAM enzymes"/>
    <property type="match status" value="1"/>
</dbReference>
<dbReference type="PROSITE" id="PS51918">
    <property type="entry name" value="RADICAL_SAM"/>
    <property type="match status" value="1"/>
</dbReference>
<protein>
    <recommendedName>
        <fullName evidence="1">Biotin synthase</fullName>
        <ecNumber evidence="1">2.8.1.6</ecNumber>
    </recommendedName>
</protein>
<sequence>MTIQANVPTGDETSDEASRQTSNEASSEILETARQQVLENGVGLTQAQLEEFLRLPDEALPAALQLAHEVRLKHCGEDVEVEGIISIKTGGCPEDCHFCSQSGLFDSPVRGVWLDIPELVKAAKETAATGATEFCIVAAVRCPDIKLMNQIKFAIDRINEAVDINIACSLGMLTQRQVDQLAEWGVHRYNHNLETARSYFPEVVTTHSYEERLETCNMVKAAGMELCCGALIGMGETLEQRAELAAQLAALEPHEVPLNFLNPRPGTPLENQGIMDGKDALRAIAAFRLAMPRTVLRYAGGRELTLGDLGTREGLLGGINAVIVGNYLTTLGRPATADLSLLVELNMPIKELQKTL</sequence>
<evidence type="ECO:0000255" key="1">
    <source>
        <dbReference type="HAMAP-Rule" id="MF_01694"/>
    </source>
</evidence>
<evidence type="ECO:0000255" key="2">
    <source>
        <dbReference type="PROSITE-ProRule" id="PRU01266"/>
    </source>
</evidence>
<evidence type="ECO:0000256" key="3">
    <source>
        <dbReference type="SAM" id="MobiDB-lite"/>
    </source>
</evidence>
<reference key="1">
    <citation type="journal article" date="2013" name="Stand. Genomic Sci.">
        <title>Complete genome sequence of Arthrobacter sp. strain FB24.</title>
        <authorList>
            <person name="Nakatsu C.H."/>
            <person name="Barabote R."/>
            <person name="Thompson S."/>
            <person name="Bruce D."/>
            <person name="Detter C."/>
            <person name="Brettin T."/>
            <person name="Han C."/>
            <person name="Beasley F."/>
            <person name="Chen W."/>
            <person name="Konopka A."/>
            <person name="Xie G."/>
        </authorList>
    </citation>
    <scope>NUCLEOTIDE SEQUENCE [LARGE SCALE GENOMIC DNA]</scope>
    <source>
        <strain>FB24</strain>
    </source>
</reference>
<accession>A0JTA3</accession>
<keyword id="KW-0001">2Fe-2S</keyword>
<keyword id="KW-0004">4Fe-4S</keyword>
<keyword id="KW-0093">Biotin biosynthesis</keyword>
<keyword id="KW-0408">Iron</keyword>
<keyword id="KW-0411">Iron-sulfur</keyword>
<keyword id="KW-0479">Metal-binding</keyword>
<keyword id="KW-1185">Reference proteome</keyword>
<keyword id="KW-0949">S-adenosyl-L-methionine</keyword>
<keyword id="KW-0808">Transferase</keyword>
<comment type="function">
    <text evidence="1">Catalyzes the conversion of dethiobiotin (DTB) to biotin by the insertion of a sulfur atom into dethiobiotin via a radical-based mechanism.</text>
</comment>
<comment type="catalytic activity">
    <reaction evidence="1">
        <text>(4R,5S)-dethiobiotin + (sulfur carrier)-SH + 2 reduced [2Fe-2S]-[ferredoxin] + 2 S-adenosyl-L-methionine = (sulfur carrier)-H + biotin + 2 5'-deoxyadenosine + 2 L-methionine + 2 oxidized [2Fe-2S]-[ferredoxin]</text>
        <dbReference type="Rhea" id="RHEA:22060"/>
        <dbReference type="Rhea" id="RHEA-COMP:10000"/>
        <dbReference type="Rhea" id="RHEA-COMP:10001"/>
        <dbReference type="Rhea" id="RHEA-COMP:14737"/>
        <dbReference type="Rhea" id="RHEA-COMP:14739"/>
        <dbReference type="ChEBI" id="CHEBI:17319"/>
        <dbReference type="ChEBI" id="CHEBI:29917"/>
        <dbReference type="ChEBI" id="CHEBI:33737"/>
        <dbReference type="ChEBI" id="CHEBI:33738"/>
        <dbReference type="ChEBI" id="CHEBI:57586"/>
        <dbReference type="ChEBI" id="CHEBI:57844"/>
        <dbReference type="ChEBI" id="CHEBI:59789"/>
        <dbReference type="ChEBI" id="CHEBI:64428"/>
        <dbReference type="ChEBI" id="CHEBI:149473"/>
        <dbReference type="EC" id="2.8.1.6"/>
    </reaction>
</comment>
<comment type="cofactor">
    <cofactor evidence="1">
        <name>[4Fe-4S] cluster</name>
        <dbReference type="ChEBI" id="CHEBI:49883"/>
    </cofactor>
    <text evidence="1">Binds 1 [4Fe-4S] cluster. The cluster is coordinated with 3 cysteines and an exchangeable S-adenosyl-L-methionine.</text>
</comment>
<comment type="cofactor">
    <cofactor evidence="1">
        <name>[2Fe-2S] cluster</name>
        <dbReference type="ChEBI" id="CHEBI:190135"/>
    </cofactor>
    <text evidence="1">Binds 1 [2Fe-2S] cluster. The cluster is coordinated with 3 cysteines and 1 arginine.</text>
</comment>
<comment type="pathway">
    <text evidence="1">Cofactor biosynthesis; biotin biosynthesis; biotin from 7,8-diaminononanoate: step 2/2.</text>
</comment>
<comment type="subunit">
    <text evidence="1">Homodimer.</text>
</comment>
<comment type="similarity">
    <text evidence="1">Belongs to the radical SAM superfamily. Biotin synthase family.</text>
</comment>
<gene>
    <name evidence="1" type="primary">bioB</name>
    <name type="ordered locus">Arth_0875</name>
</gene>